<accession>A1WUT6</accession>
<feature type="chain" id="PRO_1000025913" description="RNA-binding protein Hfq">
    <location>
        <begin position="1"/>
        <end position="90"/>
    </location>
</feature>
<feature type="domain" description="Sm" evidence="2">
    <location>
        <begin position="9"/>
        <end position="68"/>
    </location>
</feature>
<reference key="1">
    <citation type="submission" date="2006-12" db="EMBL/GenBank/DDBJ databases">
        <title>Complete sequence of Halorhodospira halophila SL1.</title>
        <authorList>
            <consortium name="US DOE Joint Genome Institute"/>
            <person name="Copeland A."/>
            <person name="Lucas S."/>
            <person name="Lapidus A."/>
            <person name="Barry K."/>
            <person name="Detter J.C."/>
            <person name="Glavina del Rio T."/>
            <person name="Hammon N."/>
            <person name="Israni S."/>
            <person name="Dalin E."/>
            <person name="Tice H."/>
            <person name="Pitluck S."/>
            <person name="Saunders E."/>
            <person name="Brettin T."/>
            <person name="Bruce D."/>
            <person name="Han C."/>
            <person name="Tapia R."/>
            <person name="Schmutz J."/>
            <person name="Larimer F."/>
            <person name="Land M."/>
            <person name="Hauser L."/>
            <person name="Kyrpides N."/>
            <person name="Mikhailova N."/>
            <person name="Hoff W."/>
            <person name="Richardson P."/>
        </authorList>
    </citation>
    <scope>NUCLEOTIDE SEQUENCE [LARGE SCALE GENOMIC DNA]</scope>
    <source>
        <strain>DSM 244 / SL1</strain>
    </source>
</reference>
<keyword id="KW-1185">Reference proteome</keyword>
<keyword id="KW-0694">RNA-binding</keyword>
<keyword id="KW-0346">Stress response</keyword>
<sequence length="90" mass="10125">MAKGQSLQEPFLNTLRKEKVPVSIYLVNGIKLQGQIESFDQFVVLLRNNVNQMVYKHAISTIVPARRVRLPQQGEEASAESIVGEEESNN</sequence>
<evidence type="ECO:0000255" key="1">
    <source>
        <dbReference type="HAMAP-Rule" id="MF_00436"/>
    </source>
</evidence>
<evidence type="ECO:0000255" key="2">
    <source>
        <dbReference type="PROSITE-ProRule" id="PRU01346"/>
    </source>
</evidence>
<proteinExistence type="inferred from homology"/>
<dbReference type="EMBL" id="CP000544">
    <property type="protein sequence ID" value="ABM61448.1"/>
    <property type="molecule type" value="Genomic_DNA"/>
</dbReference>
<dbReference type="RefSeq" id="WP_011813471.1">
    <property type="nucleotide sequence ID" value="NC_008789.1"/>
</dbReference>
<dbReference type="SMR" id="A1WUT6"/>
<dbReference type="STRING" id="349124.Hhal_0666"/>
<dbReference type="KEGG" id="hha:Hhal_0666"/>
<dbReference type="eggNOG" id="COG1923">
    <property type="taxonomic scope" value="Bacteria"/>
</dbReference>
<dbReference type="HOGENOM" id="CLU_113688_2_2_6"/>
<dbReference type="OrthoDB" id="9799751at2"/>
<dbReference type="Proteomes" id="UP000000647">
    <property type="component" value="Chromosome"/>
</dbReference>
<dbReference type="GO" id="GO:0005829">
    <property type="term" value="C:cytosol"/>
    <property type="evidence" value="ECO:0007669"/>
    <property type="project" value="TreeGrafter"/>
</dbReference>
<dbReference type="GO" id="GO:0003723">
    <property type="term" value="F:RNA binding"/>
    <property type="evidence" value="ECO:0007669"/>
    <property type="project" value="UniProtKB-UniRule"/>
</dbReference>
<dbReference type="GO" id="GO:0006355">
    <property type="term" value="P:regulation of DNA-templated transcription"/>
    <property type="evidence" value="ECO:0007669"/>
    <property type="project" value="InterPro"/>
</dbReference>
<dbReference type="GO" id="GO:0043487">
    <property type="term" value="P:regulation of RNA stability"/>
    <property type="evidence" value="ECO:0007669"/>
    <property type="project" value="TreeGrafter"/>
</dbReference>
<dbReference type="GO" id="GO:0045974">
    <property type="term" value="P:regulation of translation, ncRNA-mediated"/>
    <property type="evidence" value="ECO:0007669"/>
    <property type="project" value="TreeGrafter"/>
</dbReference>
<dbReference type="CDD" id="cd01716">
    <property type="entry name" value="Hfq"/>
    <property type="match status" value="1"/>
</dbReference>
<dbReference type="FunFam" id="2.30.30.100:FF:000001">
    <property type="entry name" value="RNA-binding protein Hfq"/>
    <property type="match status" value="1"/>
</dbReference>
<dbReference type="Gene3D" id="2.30.30.100">
    <property type="match status" value="1"/>
</dbReference>
<dbReference type="HAMAP" id="MF_00436">
    <property type="entry name" value="Hfq"/>
    <property type="match status" value="1"/>
</dbReference>
<dbReference type="InterPro" id="IPR005001">
    <property type="entry name" value="Hfq"/>
</dbReference>
<dbReference type="InterPro" id="IPR010920">
    <property type="entry name" value="LSM_dom_sf"/>
</dbReference>
<dbReference type="InterPro" id="IPR047575">
    <property type="entry name" value="Sm"/>
</dbReference>
<dbReference type="NCBIfam" id="TIGR02383">
    <property type="entry name" value="Hfq"/>
    <property type="match status" value="1"/>
</dbReference>
<dbReference type="NCBIfam" id="NF001602">
    <property type="entry name" value="PRK00395.1"/>
    <property type="match status" value="1"/>
</dbReference>
<dbReference type="PANTHER" id="PTHR34772">
    <property type="entry name" value="RNA-BINDING PROTEIN HFQ"/>
    <property type="match status" value="1"/>
</dbReference>
<dbReference type="PANTHER" id="PTHR34772:SF1">
    <property type="entry name" value="RNA-BINDING PROTEIN HFQ"/>
    <property type="match status" value="1"/>
</dbReference>
<dbReference type="Pfam" id="PF17209">
    <property type="entry name" value="Hfq"/>
    <property type="match status" value="1"/>
</dbReference>
<dbReference type="SUPFAM" id="SSF50182">
    <property type="entry name" value="Sm-like ribonucleoproteins"/>
    <property type="match status" value="1"/>
</dbReference>
<dbReference type="PROSITE" id="PS52002">
    <property type="entry name" value="SM"/>
    <property type="match status" value="1"/>
</dbReference>
<comment type="function">
    <text evidence="1">RNA chaperone that binds small regulatory RNA (sRNAs) and mRNAs to facilitate mRNA translational regulation in response to envelope stress, environmental stress and changes in metabolite concentrations. Also binds with high specificity to tRNAs.</text>
</comment>
<comment type="subunit">
    <text evidence="1">Homohexamer.</text>
</comment>
<comment type="similarity">
    <text evidence="1">Belongs to the Hfq family.</text>
</comment>
<gene>
    <name evidence="1" type="primary">hfq</name>
    <name type="ordered locus">Hhal_0666</name>
</gene>
<name>HFQ_HALHL</name>
<organism>
    <name type="scientific">Halorhodospira halophila (strain DSM 244 / SL1)</name>
    <name type="common">Ectothiorhodospira halophila (strain DSM 244 / SL1)</name>
    <dbReference type="NCBI Taxonomy" id="349124"/>
    <lineage>
        <taxon>Bacteria</taxon>
        <taxon>Pseudomonadati</taxon>
        <taxon>Pseudomonadota</taxon>
        <taxon>Gammaproteobacteria</taxon>
        <taxon>Chromatiales</taxon>
        <taxon>Ectothiorhodospiraceae</taxon>
        <taxon>Halorhodospira</taxon>
    </lineage>
</organism>
<protein>
    <recommendedName>
        <fullName evidence="1">RNA-binding protein Hfq</fullName>
    </recommendedName>
</protein>